<keyword id="KW-0067">ATP-binding</keyword>
<keyword id="KW-0150">Chloroplast</keyword>
<keyword id="KW-0275">Fatty acid biosynthesis</keyword>
<keyword id="KW-0276">Fatty acid metabolism</keyword>
<keyword id="KW-0444">Lipid biosynthesis</keyword>
<keyword id="KW-0443">Lipid metabolism</keyword>
<keyword id="KW-0547">Nucleotide-binding</keyword>
<keyword id="KW-0934">Plastid</keyword>
<keyword id="KW-1185">Reference proteome</keyword>
<keyword id="KW-0808">Transferase</keyword>
<geneLocation type="chloroplast"/>
<accession>Q85G50</accession>
<name>ACCA_CYAM1</name>
<evidence type="ECO:0000250" key="1"/>
<evidence type="ECO:0000255" key="2">
    <source>
        <dbReference type="HAMAP-Rule" id="MF_00823"/>
    </source>
</evidence>
<evidence type="ECO:0000255" key="3">
    <source>
        <dbReference type="PROSITE-ProRule" id="PRU01137"/>
    </source>
</evidence>
<reference key="1">
    <citation type="journal article" date="2003" name="DNA Res.">
        <title>Complete sequence and analysis of the plastid genome of the unicellular red alga Cyanidioschyzon merolae.</title>
        <authorList>
            <person name="Ohta N."/>
            <person name="Matsuzaki M."/>
            <person name="Misumi O."/>
            <person name="Miyagishima S.-Y."/>
            <person name="Nozaki H."/>
            <person name="Tanaka K."/>
            <person name="Shin-i T."/>
            <person name="Kohara Y."/>
            <person name="Kuroiwa T."/>
        </authorList>
    </citation>
    <scope>NUCLEOTIDE SEQUENCE [LARGE SCALE GENOMIC DNA]</scope>
    <source>
        <strain>NIES-3377 / 10D</strain>
    </source>
</reference>
<feature type="chain" id="PRO_0000275158" description="Acetyl-coenzyme A carboxylase carboxyl transferase subunit alpha">
    <location>
        <begin position="1"/>
        <end position="310"/>
    </location>
</feature>
<feature type="domain" description="CoA carboxyltransferase C-terminal" evidence="3">
    <location>
        <begin position="31"/>
        <end position="285"/>
    </location>
</feature>
<gene>
    <name evidence="2" type="primary">accA</name>
</gene>
<proteinExistence type="inferred from homology"/>
<comment type="function">
    <text evidence="2">Component of the acetyl coenzyme A carboxylase (ACC) complex. First, biotin carboxylase catalyzes the carboxylation of biotin on its carrier protein (BCCP) and then the CO(2) group is transferred by the carboxyltransferase to acetyl-CoA to form malonyl-CoA.</text>
</comment>
<comment type="catalytic activity">
    <reaction evidence="2">
        <text>N(6)-carboxybiotinyl-L-lysyl-[protein] + acetyl-CoA = N(6)-biotinyl-L-lysyl-[protein] + malonyl-CoA</text>
        <dbReference type="Rhea" id="RHEA:54728"/>
        <dbReference type="Rhea" id="RHEA-COMP:10505"/>
        <dbReference type="Rhea" id="RHEA-COMP:10506"/>
        <dbReference type="ChEBI" id="CHEBI:57288"/>
        <dbReference type="ChEBI" id="CHEBI:57384"/>
        <dbReference type="ChEBI" id="CHEBI:83144"/>
        <dbReference type="ChEBI" id="CHEBI:83145"/>
        <dbReference type="EC" id="2.1.3.15"/>
    </reaction>
</comment>
<comment type="pathway">
    <text evidence="2">Lipid metabolism; malonyl-CoA biosynthesis; malonyl-CoA from acetyl-CoA: step 1/1.</text>
</comment>
<comment type="subunit">
    <text evidence="1">Acetyl-CoA carboxylase is a heterohexamer composed of biotin carboxyl carrier protein (accB), biotin carboxylase (accC) and two subunits each of ACCase subunit alpha (accA) and ACCase subunit beta (accD).</text>
</comment>
<comment type="subcellular location">
    <subcellularLocation>
        <location>Plastid</location>
        <location>Chloroplast</location>
    </subcellularLocation>
</comment>
<comment type="similarity">
    <text evidence="2">Belongs to the AccA family.</text>
</comment>
<dbReference type="EC" id="2.1.3.15" evidence="2"/>
<dbReference type="EMBL" id="AB002583">
    <property type="protein sequence ID" value="BAC76141.1"/>
    <property type="molecule type" value="Genomic_DNA"/>
</dbReference>
<dbReference type="RefSeq" id="NP_848979.1">
    <property type="nucleotide sequence ID" value="NC_004799.1"/>
</dbReference>
<dbReference type="SMR" id="Q85G50"/>
<dbReference type="STRING" id="280699.Q85G50"/>
<dbReference type="EnsemblPlants" id="CMV056CT">
    <property type="protein sequence ID" value="CMV056CT"/>
    <property type="gene ID" value="CMV056C"/>
</dbReference>
<dbReference type="GeneID" id="845158"/>
<dbReference type="Gramene" id="CMV056CT">
    <property type="protein sequence ID" value="CMV056CT"/>
    <property type="gene ID" value="CMV056C"/>
</dbReference>
<dbReference type="KEGG" id="cme:CymeCp047"/>
<dbReference type="eggNOG" id="ENOG502QPRP">
    <property type="taxonomic scope" value="Eukaryota"/>
</dbReference>
<dbReference type="HOGENOM" id="CLU_015486_0_2_1"/>
<dbReference type="UniPathway" id="UPA00655">
    <property type="reaction ID" value="UER00711"/>
</dbReference>
<dbReference type="Proteomes" id="UP000007014">
    <property type="component" value="Chloroplast"/>
</dbReference>
<dbReference type="GO" id="GO:0009317">
    <property type="term" value="C:acetyl-CoA carboxylase complex"/>
    <property type="evidence" value="ECO:0007669"/>
    <property type="project" value="InterPro"/>
</dbReference>
<dbReference type="GO" id="GO:0009507">
    <property type="term" value="C:chloroplast"/>
    <property type="evidence" value="ECO:0007669"/>
    <property type="project" value="UniProtKB-SubCell"/>
</dbReference>
<dbReference type="GO" id="GO:0003989">
    <property type="term" value="F:acetyl-CoA carboxylase activity"/>
    <property type="evidence" value="ECO:0007669"/>
    <property type="project" value="InterPro"/>
</dbReference>
<dbReference type="GO" id="GO:0005524">
    <property type="term" value="F:ATP binding"/>
    <property type="evidence" value="ECO:0007669"/>
    <property type="project" value="UniProtKB-KW"/>
</dbReference>
<dbReference type="GO" id="GO:0016743">
    <property type="term" value="F:carboxyl- or carbamoyltransferase activity"/>
    <property type="evidence" value="ECO:0007669"/>
    <property type="project" value="UniProtKB-UniRule"/>
</dbReference>
<dbReference type="GO" id="GO:0006633">
    <property type="term" value="P:fatty acid biosynthetic process"/>
    <property type="evidence" value="ECO:0007669"/>
    <property type="project" value="UniProtKB-KW"/>
</dbReference>
<dbReference type="GO" id="GO:2001295">
    <property type="term" value="P:malonyl-CoA biosynthetic process"/>
    <property type="evidence" value="ECO:0007669"/>
    <property type="project" value="UniProtKB-UniRule"/>
</dbReference>
<dbReference type="Gene3D" id="3.90.226.10">
    <property type="entry name" value="2-enoyl-CoA Hydratase, Chain A, domain 1"/>
    <property type="match status" value="1"/>
</dbReference>
<dbReference type="HAMAP" id="MF_00823">
    <property type="entry name" value="AcetylCoA_CT_alpha"/>
    <property type="match status" value="1"/>
</dbReference>
<dbReference type="InterPro" id="IPR001095">
    <property type="entry name" value="Acetyl_CoA_COase_a_su"/>
</dbReference>
<dbReference type="InterPro" id="IPR029045">
    <property type="entry name" value="ClpP/crotonase-like_dom_sf"/>
</dbReference>
<dbReference type="InterPro" id="IPR011763">
    <property type="entry name" value="COA_CT_C"/>
</dbReference>
<dbReference type="NCBIfam" id="TIGR00513">
    <property type="entry name" value="accA"/>
    <property type="match status" value="1"/>
</dbReference>
<dbReference type="NCBIfam" id="NF041504">
    <property type="entry name" value="AccA_sub"/>
    <property type="match status" value="1"/>
</dbReference>
<dbReference type="NCBIfam" id="NF004344">
    <property type="entry name" value="PRK05724.1"/>
    <property type="match status" value="1"/>
</dbReference>
<dbReference type="PANTHER" id="PTHR42853">
    <property type="entry name" value="ACETYL-COENZYME A CARBOXYLASE CARBOXYL TRANSFERASE SUBUNIT ALPHA"/>
    <property type="match status" value="1"/>
</dbReference>
<dbReference type="PANTHER" id="PTHR42853:SF3">
    <property type="entry name" value="ACETYL-COENZYME A CARBOXYLASE CARBOXYL TRANSFERASE SUBUNIT ALPHA, CHLOROPLASTIC"/>
    <property type="match status" value="1"/>
</dbReference>
<dbReference type="Pfam" id="PF03255">
    <property type="entry name" value="ACCA"/>
    <property type="match status" value="1"/>
</dbReference>
<dbReference type="PRINTS" id="PR01069">
    <property type="entry name" value="ACCCTRFRASEA"/>
</dbReference>
<dbReference type="SUPFAM" id="SSF52096">
    <property type="entry name" value="ClpP/crotonase"/>
    <property type="match status" value="1"/>
</dbReference>
<dbReference type="PROSITE" id="PS50989">
    <property type="entry name" value="COA_CT_CTER"/>
    <property type="match status" value="1"/>
</dbReference>
<protein>
    <recommendedName>
        <fullName evidence="2">Acetyl-coenzyme A carboxylase carboxyl transferase subunit alpha</fullName>
        <shortName evidence="2">ACCase subunit alpha</shortName>
        <shortName evidence="2">Acetyl-CoA carboxylase carboxyltransferase subunit alpha</shortName>
        <ecNumber evidence="2">2.1.3.15</ecNumber>
    </recommendedName>
</protein>
<sequence>METHFHEWQKSLQLIQQKSEELQREQIQLKSFERELRIINKWFYYGLHYEQKLQLARHPKRPTSLDYIEGMSQDWIELHGDRKGSDDQALITGIAQVEDETIVFLAHQKGRNTKENLQRNFGMPSPGGYRKALRIMNHANKFGLPLVTLIDTPGAWAGVEAEKEGQAHAIATCLQTMFSLEVPMISVIIGEGGSGGALAIGVSNWMMMLEHAVYTVATPEACAAILWKDASKSAEAAEALKIGAEDLLALGVIDEIIPEPIGCAHQDAASMTKRLKQKILRRLKQLKILSGKQLRAHRAERFRHLGYYVE</sequence>
<organism>
    <name type="scientific">Cyanidioschyzon merolae (strain NIES-3377 / 10D)</name>
    <name type="common">Unicellular red alga</name>
    <dbReference type="NCBI Taxonomy" id="280699"/>
    <lineage>
        <taxon>Eukaryota</taxon>
        <taxon>Rhodophyta</taxon>
        <taxon>Bangiophyceae</taxon>
        <taxon>Cyanidiales</taxon>
        <taxon>Cyanidiaceae</taxon>
        <taxon>Cyanidioschyzon</taxon>
    </lineage>
</organism>